<dbReference type="EC" id="2.7.8.7" evidence="1"/>
<dbReference type="EMBL" id="AE017198">
    <property type="protein sequence ID" value="AAS08254.1"/>
    <property type="molecule type" value="Genomic_DNA"/>
</dbReference>
<dbReference type="RefSeq" id="WP_011161458.1">
    <property type="nucleotide sequence ID" value="NC_005362.1"/>
</dbReference>
<dbReference type="SMR" id="Q74LB3"/>
<dbReference type="KEGG" id="ljo:LJ_0271"/>
<dbReference type="eggNOG" id="COG0736">
    <property type="taxonomic scope" value="Bacteria"/>
</dbReference>
<dbReference type="HOGENOM" id="CLU_089696_1_2_9"/>
<dbReference type="Proteomes" id="UP000000581">
    <property type="component" value="Chromosome"/>
</dbReference>
<dbReference type="GO" id="GO:0005737">
    <property type="term" value="C:cytoplasm"/>
    <property type="evidence" value="ECO:0007669"/>
    <property type="project" value="UniProtKB-SubCell"/>
</dbReference>
<dbReference type="GO" id="GO:0008897">
    <property type="term" value="F:holo-[acyl-carrier-protein] synthase activity"/>
    <property type="evidence" value="ECO:0007669"/>
    <property type="project" value="UniProtKB-UniRule"/>
</dbReference>
<dbReference type="GO" id="GO:0000287">
    <property type="term" value="F:magnesium ion binding"/>
    <property type="evidence" value="ECO:0007669"/>
    <property type="project" value="UniProtKB-UniRule"/>
</dbReference>
<dbReference type="GO" id="GO:0006633">
    <property type="term" value="P:fatty acid biosynthetic process"/>
    <property type="evidence" value="ECO:0007669"/>
    <property type="project" value="UniProtKB-UniRule"/>
</dbReference>
<dbReference type="Gene3D" id="3.90.470.20">
    <property type="entry name" value="4'-phosphopantetheinyl transferase domain"/>
    <property type="match status" value="1"/>
</dbReference>
<dbReference type="HAMAP" id="MF_00101">
    <property type="entry name" value="AcpS"/>
    <property type="match status" value="1"/>
</dbReference>
<dbReference type="InterPro" id="IPR008278">
    <property type="entry name" value="4-PPantetheinyl_Trfase_dom"/>
</dbReference>
<dbReference type="InterPro" id="IPR037143">
    <property type="entry name" value="4-PPantetheinyl_Trfase_dom_sf"/>
</dbReference>
<dbReference type="InterPro" id="IPR002582">
    <property type="entry name" value="ACPS"/>
</dbReference>
<dbReference type="InterPro" id="IPR004568">
    <property type="entry name" value="Ppantetheine-prot_Trfase_dom"/>
</dbReference>
<dbReference type="NCBIfam" id="TIGR00516">
    <property type="entry name" value="acpS"/>
    <property type="match status" value="1"/>
</dbReference>
<dbReference type="NCBIfam" id="TIGR00556">
    <property type="entry name" value="pantethn_trn"/>
    <property type="match status" value="1"/>
</dbReference>
<dbReference type="Pfam" id="PF01648">
    <property type="entry name" value="ACPS"/>
    <property type="match status" value="1"/>
</dbReference>
<dbReference type="SUPFAM" id="SSF56214">
    <property type="entry name" value="4'-phosphopantetheinyl transferase"/>
    <property type="match status" value="1"/>
</dbReference>
<keyword id="KW-0963">Cytoplasm</keyword>
<keyword id="KW-0275">Fatty acid biosynthesis</keyword>
<keyword id="KW-0276">Fatty acid metabolism</keyword>
<keyword id="KW-0444">Lipid biosynthesis</keyword>
<keyword id="KW-0443">Lipid metabolism</keyword>
<keyword id="KW-0460">Magnesium</keyword>
<keyword id="KW-0479">Metal-binding</keyword>
<keyword id="KW-0808">Transferase</keyword>
<sequence>MIRGVGIDSVEVERMKKIVEKGDKFAKRVLTPKEFEQYQQLKGKRKVEYLGGRFSLKESFSKAMGTGLGKYVGFQDIETLWDDLGHPVMTSTKFSGNIFPSITHDDHEIITVVVLEELN</sequence>
<accession>Q74LB3</accession>
<gene>
    <name evidence="1" type="primary">acpS</name>
    <name type="ordered locus">LJ_0271</name>
</gene>
<organism>
    <name type="scientific">Lactobacillus johnsonii (strain CNCM I-12250 / La1 / NCC 533)</name>
    <dbReference type="NCBI Taxonomy" id="257314"/>
    <lineage>
        <taxon>Bacteria</taxon>
        <taxon>Bacillati</taxon>
        <taxon>Bacillota</taxon>
        <taxon>Bacilli</taxon>
        <taxon>Lactobacillales</taxon>
        <taxon>Lactobacillaceae</taxon>
        <taxon>Lactobacillus</taxon>
    </lineage>
</organism>
<feature type="chain" id="PRO_0000175656" description="Holo-[acyl-carrier-protein] synthase">
    <location>
        <begin position="1"/>
        <end position="119"/>
    </location>
</feature>
<feature type="binding site" evidence="1">
    <location>
        <position position="8"/>
    </location>
    <ligand>
        <name>Mg(2+)</name>
        <dbReference type="ChEBI" id="CHEBI:18420"/>
    </ligand>
</feature>
<feature type="binding site" evidence="1">
    <location>
        <position position="58"/>
    </location>
    <ligand>
        <name>Mg(2+)</name>
        <dbReference type="ChEBI" id="CHEBI:18420"/>
    </ligand>
</feature>
<evidence type="ECO:0000255" key="1">
    <source>
        <dbReference type="HAMAP-Rule" id="MF_00101"/>
    </source>
</evidence>
<reference key="1">
    <citation type="journal article" date="2004" name="Proc. Natl. Acad. Sci. U.S.A.">
        <title>The genome sequence of the probiotic intestinal bacterium Lactobacillus johnsonii NCC 533.</title>
        <authorList>
            <person name="Pridmore R.D."/>
            <person name="Berger B."/>
            <person name="Desiere F."/>
            <person name="Vilanova D."/>
            <person name="Barretto C."/>
            <person name="Pittet A.-C."/>
            <person name="Zwahlen M.-C."/>
            <person name="Rouvet M."/>
            <person name="Altermann E."/>
            <person name="Barrangou R."/>
            <person name="Mollet B."/>
            <person name="Mercenier A."/>
            <person name="Klaenhammer T."/>
            <person name="Arigoni F."/>
            <person name="Schell M.A."/>
        </authorList>
    </citation>
    <scope>NUCLEOTIDE SEQUENCE [LARGE SCALE GENOMIC DNA]</scope>
    <source>
        <strain>CNCM I-1225 / La1 / NCC 533</strain>
    </source>
</reference>
<proteinExistence type="inferred from homology"/>
<name>ACPS_LACJO</name>
<comment type="function">
    <text evidence="1">Transfers the 4'-phosphopantetheine moiety from coenzyme A to a Ser of acyl-carrier-protein.</text>
</comment>
<comment type="catalytic activity">
    <reaction evidence="1">
        <text>apo-[ACP] + CoA = holo-[ACP] + adenosine 3',5'-bisphosphate + H(+)</text>
        <dbReference type="Rhea" id="RHEA:12068"/>
        <dbReference type="Rhea" id="RHEA-COMP:9685"/>
        <dbReference type="Rhea" id="RHEA-COMP:9690"/>
        <dbReference type="ChEBI" id="CHEBI:15378"/>
        <dbReference type="ChEBI" id="CHEBI:29999"/>
        <dbReference type="ChEBI" id="CHEBI:57287"/>
        <dbReference type="ChEBI" id="CHEBI:58343"/>
        <dbReference type="ChEBI" id="CHEBI:64479"/>
        <dbReference type="EC" id="2.7.8.7"/>
    </reaction>
</comment>
<comment type="cofactor">
    <cofactor evidence="1">
        <name>Mg(2+)</name>
        <dbReference type="ChEBI" id="CHEBI:18420"/>
    </cofactor>
</comment>
<comment type="subcellular location">
    <subcellularLocation>
        <location evidence="1">Cytoplasm</location>
    </subcellularLocation>
</comment>
<comment type="similarity">
    <text evidence="1">Belongs to the P-Pant transferase superfamily. AcpS family.</text>
</comment>
<protein>
    <recommendedName>
        <fullName evidence="1">Holo-[acyl-carrier-protein] synthase</fullName>
        <shortName evidence="1">Holo-ACP synthase</shortName>
        <ecNumber evidence="1">2.7.8.7</ecNumber>
    </recommendedName>
    <alternativeName>
        <fullName evidence="1">4'-phosphopantetheinyl transferase AcpS</fullName>
    </alternativeName>
</protein>